<dbReference type="EMBL" id="EU827801">
    <property type="protein sequence ID" value="ACF08001.1"/>
    <property type="molecule type" value="mRNA"/>
</dbReference>
<dbReference type="GO" id="GO:0005576">
    <property type="term" value="C:extracellular region"/>
    <property type="evidence" value="ECO:0000250"/>
    <property type="project" value="UniProtKB"/>
</dbReference>
<dbReference type="GO" id="GO:0050829">
    <property type="term" value="P:defense response to Gram-negative bacterium"/>
    <property type="evidence" value="ECO:0000250"/>
    <property type="project" value="UniProtKB"/>
</dbReference>
<dbReference type="GO" id="GO:0050830">
    <property type="term" value="P:defense response to Gram-positive bacterium"/>
    <property type="evidence" value="ECO:0000250"/>
    <property type="project" value="UniProtKB"/>
</dbReference>
<dbReference type="InterPro" id="IPR004275">
    <property type="entry name" value="Frog_antimicrobial_propeptide"/>
</dbReference>
<dbReference type="Pfam" id="PF03032">
    <property type="entry name" value="FSAP_sig_propep"/>
    <property type="match status" value="1"/>
</dbReference>
<name>BR1CD_RANDY</name>
<organism>
    <name type="scientific">Rana dybowskii</name>
    <name type="common">Dybovsky's frog</name>
    <name type="synonym">Korean brown frog</name>
    <dbReference type="NCBI Taxonomy" id="71582"/>
    <lineage>
        <taxon>Eukaryota</taxon>
        <taxon>Metazoa</taxon>
        <taxon>Chordata</taxon>
        <taxon>Craniata</taxon>
        <taxon>Vertebrata</taxon>
        <taxon>Euteleostomi</taxon>
        <taxon>Amphibia</taxon>
        <taxon>Batrachia</taxon>
        <taxon>Anura</taxon>
        <taxon>Neobatrachia</taxon>
        <taxon>Ranoidea</taxon>
        <taxon>Ranidae</taxon>
        <taxon>Rana</taxon>
        <taxon>Rana</taxon>
    </lineage>
</organism>
<keyword id="KW-0878">Amphibian defense peptide</keyword>
<keyword id="KW-0044">Antibiotic</keyword>
<keyword id="KW-0929">Antimicrobial</keyword>
<keyword id="KW-0165">Cleavage on pair of basic residues</keyword>
<keyword id="KW-1015">Disulfide bond</keyword>
<keyword id="KW-0964">Secreted</keyword>
<keyword id="KW-0732">Signal</keyword>
<reference evidence="5 6" key="1">
    <citation type="journal article" date="2009" name="Comp. Biochem. Physiol.">
        <title>Characterization of antimicrobial peptides isolated from the skin of the Chinese frog, Rana dybowskii.</title>
        <authorList>
            <person name="Jin L.-L."/>
            <person name="Li Q."/>
            <person name="Song S.-S."/>
            <person name="Feng K."/>
            <person name="Zhang D.-B."/>
            <person name="Wang Q.-Y."/>
            <person name="Chen Y.-H."/>
        </authorList>
    </citation>
    <scope>NUCLEOTIDE SEQUENCE [MRNA]</scope>
    <scope>TISSUE SPECIFICITY</scope>
    <source>
        <tissue evidence="6">Skin</tissue>
    </source>
</reference>
<sequence length="66" mass="7836">MFTLKKSLLILFFLGTINFSLCEEERNAEEERRDDPEERDVEVEKRFLPLLLAGLPKLLCFLFKKC</sequence>
<proteinExistence type="evidence at transcript level"/>
<protein>
    <recommendedName>
        <fullName evidence="4 6">Brevinin-1CDYd</fullName>
    </recommendedName>
</protein>
<comment type="function">
    <text evidence="1">Antimicrobial peptide.</text>
</comment>
<comment type="subcellular location">
    <subcellularLocation>
        <location evidence="1">Secreted</location>
    </subcellularLocation>
</comment>
<comment type="tissue specificity">
    <text evidence="3">Expressed by the skin glands.</text>
</comment>
<comment type="similarity">
    <text evidence="2">Belongs to the frog skin active peptide (FSAP) family. Brevinin subfamily.</text>
</comment>
<feature type="signal peptide" evidence="2 6">
    <location>
        <begin position="1"/>
        <end position="22"/>
    </location>
</feature>
<feature type="propeptide" id="PRO_0000391427" evidence="1">
    <location>
        <begin position="23"/>
        <end position="44"/>
    </location>
</feature>
<feature type="peptide" id="PRO_5000381477" description="Brevinin-1CDYd" evidence="3">
    <location>
        <begin position="47"/>
        <end position="66"/>
    </location>
</feature>
<feature type="disulfide bond" evidence="1">
    <location>
        <begin position="60"/>
        <end position="66"/>
    </location>
</feature>
<accession>B3VZU1</accession>
<evidence type="ECO:0000250" key="1">
    <source>
        <dbReference type="UniProtKB" id="P39084"/>
    </source>
</evidence>
<evidence type="ECO:0000255" key="2"/>
<evidence type="ECO:0000269" key="3">
    <source>
    </source>
</evidence>
<evidence type="ECO:0000303" key="4">
    <source>
    </source>
</evidence>
<evidence type="ECO:0000305" key="5"/>
<evidence type="ECO:0000312" key="6">
    <source>
        <dbReference type="EMBL" id="ACF08001.1"/>
    </source>
</evidence>